<proteinExistence type="evidence at protein level"/>
<feature type="chain" id="PRO_0000120172" description="Phosducin-like protein 1">
    <location>
        <begin position="1"/>
        <end position="230"/>
    </location>
</feature>
<feature type="domain" description="Phosducin" evidence="2">
    <location>
        <begin position="16"/>
        <end position="166"/>
    </location>
</feature>
<feature type="region of interest" description="Thioredoxin fold" evidence="1">
    <location>
        <begin position="81"/>
        <end position="230"/>
    </location>
</feature>
<feature type="coiled-coil region" evidence="2">
    <location>
        <begin position="25"/>
        <end position="79"/>
    </location>
</feature>
<feature type="modified residue" description="N-acetylmethionine" evidence="8">
    <location>
        <position position="1"/>
    </location>
</feature>
<name>PLP1_YEAST</name>
<protein>
    <recommendedName>
        <fullName>Phosducin-like protein 1</fullName>
    </recommendedName>
</protein>
<sequence>MEDKLDRYYTNVLSNAEKDKHTTVDSDDKSSGEENLDELLNELDRELDEDHEFLSAYRSERLQQISDHLKQVKKNVEDDGYGRLQCIDNEADAIQICTKTTMVVIHFELETFGKCQYMNEKLENLAKRYLTTRFIKVNVQTCPFLVNKLNIKVLPFVVGYKNGLEKVRYVGFSKLGNDPNGFDIRRLEQSLAHSGVIEDTFEIRKHSSVNTERFASTNHDRSESDSDLDI</sequence>
<organism>
    <name type="scientific">Saccharomyces cerevisiae (strain ATCC 204508 / S288c)</name>
    <name type="common">Baker's yeast</name>
    <dbReference type="NCBI Taxonomy" id="559292"/>
    <lineage>
        <taxon>Eukaryota</taxon>
        <taxon>Fungi</taxon>
        <taxon>Dikarya</taxon>
        <taxon>Ascomycota</taxon>
        <taxon>Saccharomycotina</taxon>
        <taxon>Saccharomycetes</taxon>
        <taxon>Saccharomycetales</taxon>
        <taxon>Saccharomycetaceae</taxon>
        <taxon>Saccharomyces</taxon>
    </lineage>
</organism>
<comment type="function">
    <text evidence="3 6">Not essential for growth. Inhibits early G-protein signaling events following pheromone stimulation. May help create heterodimerizable beta-tubulin by facilitating the efficient transfer of nascent beta-tubulin polypeptides to the folding apparatus.</text>
</comment>
<comment type="subunit">
    <text evidence="3">Interacts with the G protein beta-gamma subunit complex (STE4-STE18 complex).</text>
</comment>
<comment type="subcellular location">
    <subcellularLocation>
        <location evidence="4">Cytoplasm</location>
    </subcellularLocation>
</comment>
<comment type="miscellaneous">
    <text evidence="5">Present with 2250 molecules/cell in log phase SD medium.</text>
</comment>
<comment type="similarity">
    <text evidence="7">Belongs to the phosducin family.</text>
</comment>
<dbReference type="EMBL" id="Z46727">
    <property type="protein sequence ID" value="CAA86690.1"/>
    <property type="molecule type" value="Genomic_DNA"/>
</dbReference>
<dbReference type="EMBL" id="AY558575">
    <property type="protein sequence ID" value="AAS56901.1"/>
    <property type="molecule type" value="Genomic_DNA"/>
</dbReference>
<dbReference type="EMBL" id="BK006938">
    <property type="protein sequence ID" value="DAA12027.1"/>
    <property type="molecule type" value="Genomic_DNA"/>
</dbReference>
<dbReference type="PIR" id="S49780">
    <property type="entry name" value="S49780"/>
</dbReference>
<dbReference type="RefSeq" id="NP_010469.3">
    <property type="nucleotide sequence ID" value="NM_001180491.3"/>
</dbReference>
<dbReference type="SMR" id="Q04004"/>
<dbReference type="BioGRID" id="32237">
    <property type="interactions" value="116"/>
</dbReference>
<dbReference type="DIP" id="DIP-1793N"/>
<dbReference type="FunCoup" id="Q04004">
    <property type="interactions" value="857"/>
</dbReference>
<dbReference type="IntAct" id="Q04004">
    <property type="interactions" value="10"/>
</dbReference>
<dbReference type="MINT" id="Q04004"/>
<dbReference type="STRING" id="4932.YDR183W"/>
<dbReference type="iPTMnet" id="Q04004"/>
<dbReference type="PaxDb" id="4932-YDR183W"/>
<dbReference type="PeptideAtlas" id="Q04004"/>
<dbReference type="EnsemblFungi" id="YDR183W_mRNA">
    <property type="protein sequence ID" value="YDR183W"/>
    <property type="gene ID" value="YDR183W"/>
</dbReference>
<dbReference type="GeneID" id="851764"/>
<dbReference type="KEGG" id="sce:YDR183W"/>
<dbReference type="AGR" id="SGD:S000002591"/>
<dbReference type="SGD" id="S000002591">
    <property type="gene designation" value="PLP1"/>
</dbReference>
<dbReference type="VEuPathDB" id="FungiDB:YDR183W"/>
<dbReference type="eggNOG" id="KOG1672">
    <property type="taxonomic scope" value="Eukaryota"/>
</dbReference>
<dbReference type="HOGENOM" id="CLU_072378_0_0_1"/>
<dbReference type="InParanoid" id="Q04004"/>
<dbReference type="OMA" id="CVIAFID"/>
<dbReference type="OrthoDB" id="10257948at2759"/>
<dbReference type="BioCyc" id="YEAST:G3O-29772-MONOMER"/>
<dbReference type="BioGRID-ORCS" id="851764">
    <property type="hits" value="0 hits in 10 CRISPR screens"/>
</dbReference>
<dbReference type="PRO" id="PR:Q04004"/>
<dbReference type="Proteomes" id="UP000002311">
    <property type="component" value="Chromosome IV"/>
</dbReference>
<dbReference type="RNAct" id="Q04004">
    <property type="molecule type" value="protein"/>
</dbReference>
<dbReference type="GO" id="GO:0005737">
    <property type="term" value="C:cytoplasm"/>
    <property type="evidence" value="ECO:0000318"/>
    <property type="project" value="GO_Central"/>
</dbReference>
<dbReference type="GO" id="GO:0031683">
    <property type="term" value="F:G-protein beta/gamma-subunit complex binding"/>
    <property type="evidence" value="ECO:0000314"/>
    <property type="project" value="SGD"/>
</dbReference>
<dbReference type="GO" id="GO:0071444">
    <property type="term" value="P:cellular response to pheromone"/>
    <property type="evidence" value="ECO:0000315"/>
    <property type="project" value="SGD"/>
</dbReference>
<dbReference type="GO" id="GO:0009968">
    <property type="term" value="P:negative regulation of signal transduction"/>
    <property type="evidence" value="ECO:0007669"/>
    <property type="project" value="UniProtKB-KW"/>
</dbReference>
<dbReference type="GO" id="GO:0045944">
    <property type="term" value="P:positive regulation of transcription by RNA polymerase II"/>
    <property type="evidence" value="ECO:0000315"/>
    <property type="project" value="SGD"/>
</dbReference>
<dbReference type="GO" id="GO:0006457">
    <property type="term" value="P:protein folding"/>
    <property type="evidence" value="ECO:0000316"/>
    <property type="project" value="SGD"/>
</dbReference>
<dbReference type="CDD" id="cd02989">
    <property type="entry name" value="Phd_like_TxnDC9"/>
    <property type="match status" value="1"/>
</dbReference>
<dbReference type="Gene3D" id="3.40.30.10">
    <property type="entry name" value="Glutaredoxin"/>
    <property type="match status" value="1"/>
</dbReference>
<dbReference type="InterPro" id="IPR024253">
    <property type="entry name" value="Phosducin_thioredoxin-like_dom"/>
</dbReference>
<dbReference type="InterPro" id="IPR036249">
    <property type="entry name" value="Thioredoxin-like_sf"/>
</dbReference>
<dbReference type="PANTHER" id="PTHR21148">
    <property type="entry name" value="THIOREDOXIN DOMAIN-CONTAINING PROTEIN 9"/>
    <property type="match status" value="1"/>
</dbReference>
<dbReference type="Pfam" id="PF02114">
    <property type="entry name" value="Phosducin"/>
    <property type="match status" value="1"/>
</dbReference>
<dbReference type="SUPFAM" id="SSF52833">
    <property type="entry name" value="Thioredoxin-like"/>
    <property type="match status" value="1"/>
</dbReference>
<evidence type="ECO:0000250" key="1"/>
<evidence type="ECO:0000255" key="2"/>
<evidence type="ECO:0000269" key="3">
    <source>
    </source>
</evidence>
<evidence type="ECO:0000269" key="4">
    <source>
    </source>
</evidence>
<evidence type="ECO:0000269" key="5">
    <source>
    </source>
</evidence>
<evidence type="ECO:0000269" key="6">
    <source>
    </source>
</evidence>
<evidence type="ECO:0000305" key="7"/>
<evidence type="ECO:0007744" key="8">
    <source>
    </source>
</evidence>
<gene>
    <name type="primary">PLP1</name>
    <name type="ordered locus">YDR183W</name>
    <name type="ORF">YD9395.17</name>
</gene>
<accession>Q04004</accession>
<accession>D6VSG7</accession>
<keyword id="KW-0007">Acetylation</keyword>
<keyword id="KW-0143">Chaperone</keyword>
<keyword id="KW-0175">Coiled coil</keyword>
<keyword id="KW-0963">Cytoplasm</keyword>
<keyword id="KW-0589">Pheromone response</keyword>
<keyword id="KW-1185">Reference proteome</keyword>
<keyword id="KW-0734">Signal transduction inhibitor</keyword>
<reference key="1">
    <citation type="journal article" date="1997" name="Nature">
        <title>The nucleotide sequence of Saccharomyces cerevisiae chromosome IV.</title>
        <authorList>
            <person name="Jacq C."/>
            <person name="Alt-Moerbe J."/>
            <person name="Andre B."/>
            <person name="Arnold W."/>
            <person name="Bahr A."/>
            <person name="Ballesta J.P.G."/>
            <person name="Bargues M."/>
            <person name="Baron L."/>
            <person name="Becker A."/>
            <person name="Biteau N."/>
            <person name="Bloecker H."/>
            <person name="Blugeon C."/>
            <person name="Boskovic J."/>
            <person name="Brandt P."/>
            <person name="Brueckner M."/>
            <person name="Buitrago M.J."/>
            <person name="Coster F."/>
            <person name="Delaveau T."/>
            <person name="del Rey F."/>
            <person name="Dujon B."/>
            <person name="Eide L.G."/>
            <person name="Garcia-Cantalejo J.M."/>
            <person name="Goffeau A."/>
            <person name="Gomez-Peris A."/>
            <person name="Granotier C."/>
            <person name="Hanemann V."/>
            <person name="Hankeln T."/>
            <person name="Hoheisel J.D."/>
            <person name="Jaeger W."/>
            <person name="Jimenez A."/>
            <person name="Jonniaux J.-L."/>
            <person name="Kraemer C."/>
            <person name="Kuester H."/>
            <person name="Laamanen P."/>
            <person name="Legros Y."/>
            <person name="Louis E.J."/>
            <person name="Moeller-Rieker S."/>
            <person name="Monnet A."/>
            <person name="Moro M."/>
            <person name="Mueller-Auer S."/>
            <person name="Nussbaumer B."/>
            <person name="Paricio N."/>
            <person name="Paulin L."/>
            <person name="Perea J."/>
            <person name="Perez-Alonso M."/>
            <person name="Perez-Ortin J.E."/>
            <person name="Pohl T.M."/>
            <person name="Prydz H."/>
            <person name="Purnelle B."/>
            <person name="Rasmussen S.W."/>
            <person name="Remacha M.A."/>
            <person name="Revuelta J.L."/>
            <person name="Rieger M."/>
            <person name="Salom D."/>
            <person name="Saluz H.P."/>
            <person name="Saiz J.E."/>
            <person name="Saren A.-M."/>
            <person name="Schaefer M."/>
            <person name="Scharfe M."/>
            <person name="Schmidt E.R."/>
            <person name="Schneider C."/>
            <person name="Scholler P."/>
            <person name="Schwarz S."/>
            <person name="Soler-Mira A."/>
            <person name="Urrestarazu L.A."/>
            <person name="Verhasselt P."/>
            <person name="Vissers S."/>
            <person name="Voet M."/>
            <person name="Volckaert G."/>
            <person name="Wagner G."/>
            <person name="Wambutt R."/>
            <person name="Wedler E."/>
            <person name="Wedler H."/>
            <person name="Woelfl S."/>
            <person name="Harris D.E."/>
            <person name="Bowman S."/>
            <person name="Brown D."/>
            <person name="Churcher C.M."/>
            <person name="Connor R."/>
            <person name="Dedman K."/>
            <person name="Gentles S."/>
            <person name="Hamlin N."/>
            <person name="Hunt S."/>
            <person name="Jones L."/>
            <person name="McDonald S."/>
            <person name="Murphy L.D."/>
            <person name="Niblett D."/>
            <person name="Odell C."/>
            <person name="Oliver K."/>
            <person name="Rajandream M.A."/>
            <person name="Richards C."/>
            <person name="Shore L."/>
            <person name="Walsh S.V."/>
            <person name="Barrell B.G."/>
            <person name="Dietrich F.S."/>
            <person name="Mulligan J.T."/>
            <person name="Allen E."/>
            <person name="Araujo R."/>
            <person name="Aviles E."/>
            <person name="Berno A."/>
            <person name="Carpenter J."/>
            <person name="Chen E."/>
            <person name="Cherry J.M."/>
            <person name="Chung E."/>
            <person name="Duncan M."/>
            <person name="Hunicke-Smith S."/>
            <person name="Hyman R.W."/>
            <person name="Komp C."/>
            <person name="Lashkari D."/>
            <person name="Lew H."/>
            <person name="Lin D."/>
            <person name="Mosedale D."/>
            <person name="Nakahara K."/>
            <person name="Namath A."/>
            <person name="Oefner P."/>
            <person name="Oh C."/>
            <person name="Petel F.X."/>
            <person name="Roberts D."/>
            <person name="Schramm S."/>
            <person name="Schroeder M."/>
            <person name="Shogren T."/>
            <person name="Shroff N."/>
            <person name="Winant A."/>
            <person name="Yelton M.A."/>
            <person name="Botstein D."/>
            <person name="Davis R.W."/>
            <person name="Johnston M."/>
            <person name="Andrews S."/>
            <person name="Brinkman R."/>
            <person name="Cooper J."/>
            <person name="Ding H."/>
            <person name="Du Z."/>
            <person name="Favello A."/>
            <person name="Fulton L."/>
            <person name="Gattung S."/>
            <person name="Greco T."/>
            <person name="Hallsworth K."/>
            <person name="Hawkins J."/>
            <person name="Hillier L.W."/>
            <person name="Jier M."/>
            <person name="Johnson D."/>
            <person name="Johnston L."/>
            <person name="Kirsten J."/>
            <person name="Kucaba T."/>
            <person name="Langston Y."/>
            <person name="Latreille P."/>
            <person name="Le T."/>
            <person name="Mardis E."/>
            <person name="Menezes S."/>
            <person name="Miller N."/>
            <person name="Nhan M."/>
            <person name="Pauley A."/>
            <person name="Peluso D."/>
            <person name="Rifkin L."/>
            <person name="Riles L."/>
            <person name="Taich A."/>
            <person name="Trevaskis E."/>
            <person name="Vignati D."/>
            <person name="Wilcox L."/>
            <person name="Wohldman P."/>
            <person name="Vaudin M."/>
            <person name="Wilson R."/>
            <person name="Waterston R."/>
            <person name="Albermann K."/>
            <person name="Hani J."/>
            <person name="Heumann K."/>
            <person name="Kleine K."/>
            <person name="Mewes H.-W."/>
            <person name="Zollner A."/>
            <person name="Zaccaria P."/>
        </authorList>
    </citation>
    <scope>NUCLEOTIDE SEQUENCE [LARGE SCALE GENOMIC DNA]</scope>
    <source>
        <strain>ATCC 204508 / S288c</strain>
    </source>
</reference>
<reference key="2">
    <citation type="journal article" date="2014" name="G3 (Bethesda)">
        <title>The reference genome sequence of Saccharomyces cerevisiae: Then and now.</title>
        <authorList>
            <person name="Engel S.R."/>
            <person name="Dietrich F.S."/>
            <person name="Fisk D.G."/>
            <person name="Binkley G."/>
            <person name="Balakrishnan R."/>
            <person name="Costanzo M.C."/>
            <person name="Dwight S.S."/>
            <person name="Hitz B.C."/>
            <person name="Karra K."/>
            <person name="Nash R.S."/>
            <person name="Weng S."/>
            <person name="Wong E.D."/>
            <person name="Lloyd P."/>
            <person name="Skrzypek M.S."/>
            <person name="Miyasato S.R."/>
            <person name="Simison M."/>
            <person name="Cherry J.M."/>
        </authorList>
    </citation>
    <scope>GENOME REANNOTATION</scope>
    <source>
        <strain>ATCC 204508 / S288c</strain>
    </source>
</reference>
<reference key="3">
    <citation type="journal article" date="2007" name="Genome Res.">
        <title>Approaching a complete repository of sequence-verified protein-encoding clones for Saccharomyces cerevisiae.</title>
        <authorList>
            <person name="Hu Y."/>
            <person name="Rolfs A."/>
            <person name="Bhullar B."/>
            <person name="Murthy T.V.S."/>
            <person name="Zhu C."/>
            <person name="Berger M.F."/>
            <person name="Camargo A.A."/>
            <person name="Kelley F."/>
            <person name="McCarron S."/>
            <person name="Jepson D."/>
            <person name="Richardson A."/>
            <person name="Raphael J."/>
            <person name="Moreira D."/>
            <person name="Taycher E."/>
            <person name="Zuo D."/>
            <person name="Mohr S."/>
            <person name="Kane M.F."/>
            <person name="Williamson J."/>
            <person name="Simpson A.J.G."/>
            <person name="Bulyk M.L."/>
            <person name="Harlow E."/>
            <person name="Marsischky G."/>
            <person name="Kolodner R.D."/>
            <person name="LaBaer J."/>
        </authorList>
    </citation>
    <scope>NUCLEOTIDE SEQUENCE [GENOMIC DNA]</scope>
    <source>
        <strain>ATCC 204508 / S288c</strain>
    </source>
</reference>
<reference key="4">
    <citation type="journal article" date="2000" name="J. Biol. Chem.">
        <title>Functional analysis of Plp1 and Plp2, two homologues of phosducin in yeast.</title>
        <authorList>
            <person name="Flanary P.L."/>
            <person name="DiBello P.R."/>
            <person name="Estrada P."/>
            <person name="Dohlman H.G."/>
        </authorList>
    </citation>
    <scope>FUNCTION</scope>
    <scope>INTERACTION WITH THE STE4-STE18 COMPLEX</scope>
</reference>
<reference key="5">
    <citation type="journal article" date="2003" name="Genetics">
        <title>A novel step in beta-tubulin folding is important for heterodimer formation in Saccharomyces cerevisiae.</title>
        <authorList>
            <person name="Lacefield S."/>
            <person name="Solomon F."/>
        </authorList>
    </citation>
    <scope>FUNCTION</scope>
</reference>
<reference key="6">
    <citation type="journal article" date="2003" name="Nature">
        <title>Global analysis of protein localization in budding yeast.</title>
        <authorList>
            <person name="Huh W.-K."/>
            <person name="Falvo J.V."/>
            <person name="Gerke L.C."/>
            <person name="Carroll A.S."/>
            <person name="Howson R.W."/>
            <person name="Weissman J.S."/>
            <person name="O'Shea E.K."/>
        </authorList>
    </citation>
    <scope>SUBCELLULAR LOCATION [LARGE SCALE ANALYSIS]</scope>
</reference>
<reference key="7">
    <citation type="journal article" date="2003" name="Nature">
        <title>Global analysis of protein expression in yeast.</title>
        <authorList>
            <person name="Ghaemmaghami S."/>
            <person name="Huh W.-K."/>
            <person name="Bower K."/>
            <person name="Howson R.W."/>
            <person name="Belle A."/>
            <person name="Dephoure N."/>
            <person name="O'Shea E.K."/>
            <person name="Weissman J.S."/>
        </authorList>
    </citation>
    <scope>LEVEL OF PROTEIN EXPRESSION [LARGE SCALE ANALYSIS]</scope>
</reference>
<reference key="8">
    <citation type="journal article" date="2007" name="J. Proteome Res.">
        <title>Large-scale phosphorylation analysis of alpha-factor-arrested Saccharomyces cerevisiae.</title>
        <authorList>
            <person name="Li X."/>
            <person name="Gerber S.A."/>
            <person name="Rudner A.D."/>
            <person name="Beausoleil S.A."/>
            <person name="Haas W."/>
            <person name="Villen J."/>
            <person name="Elias J.E."/>
            <person name="Gygi S.P."/>
        </authorList>
    </citation>
    <scope>IDENTIFICATION BY MASS SPECTROMETRY [LARGE SCALE ANALYSIS]</scope>
    <source>
        <strain>ADR376</strain>
    </source>
</reference>
<reference key="9">
    <citation type="journal article" date="2012" name="Proc. Natl. Acad. Sci. U.S.A.">
        <title>N-terminal acetylome analyses and functional insights of the N-terminal acetyltransferase NatB.</title>
        <authorList>
            <person name="Van Damme P."/>
            <person name="Lasa M."/>
            <person name="Polevoda B."/>
            <person name="Gazquez C."/>
            <person name="Elosegui-Artola A."/>
            <person name="Kim D.S."/>
            <person name="De Juan-Pardo E."/>
            <person name="Demeyer K."/>
            <person name="Hole K."/>
            <person name="Larrea E."/>
            <person name="Timmerman E."/>
            <person name="Prieto J."/>
            <person name="Arnesen T."/>
            <person name="Sherman F."/>
            <person name="Gevaert K."/>
            <person name="Aldabe R."/>
        </authorList>
    </citation>
    <scope>ACETYLATION [LARGE SCALE ANALYSIS] AT MET-1</scope>
    <scope>IDENTIFICATION BY MASS SPECTROMETRY [LARGE SCALE ANALYSIS]</scope>
</reference>